<keyword id="KW-0378">Hydrolase</keyword>
<keyword id="KW-0479">Metal-binding</keyword>
<keyword id="KW-1185">Reference proteome</keyword>
<keyword id="KW-0862">Zinc</keyword>
<comment type="function">
    <text evidence="1">D-aminoacyl-tRNA deacylase with broad substrate specificity. By recycling D-aminoacyl-tRNA to D-amino acids and free tRNA molecules, this enzyme counteracts the toxicity associated with the formation of D-aminoacyl-tRNA entities in vivo.</text>
</comment>
<comment type="catalytic activity">
    <reaction evidence="1">
        <text>a D-aminoacyl-tRNA + H2O = a tRNA + a D-alpha-amino acid + H(+)</text>
        <dbReference type="Rhea" id="RHEA:13953"/>
        <dbReference type="Rhea" id="RHEA-COMP:10123"/>
        <dbReference type="Rhea" id="RHEA-COMP:10124"/>
        <dbReference type="ChEBI" id="CHEBI:15377"/>
        <dbReference type="ChEBI" id="CHEBI:15378"/>
        <dbReference type="ChEBI" id="CHEBI:59871"/>
        <dbReference type="ChEBI" id="CHEBI:78442"/>
        <dbReference type="ChEBI" id="CHEBI:79333"/>
        <dbReference type="EC" id="3.1.1.96"/>
    </reaction>
</comment>
<comment type="catalytic activity">
    <reaction evidence="1">
        <text>glycyl-tRNA(Ala) + H2O = tRNA(Ala) + glycine + H(+)</text>
        <dbReference type="Rhea" id="RHEA:53744"/>
        <dbReference type="Rhea" id="RHEA-COMP:9657"/>
        <dbReference type="Rhea" id="RHEA-COMP:13640"/>
        <dbReference type="ChEBI" id="CHEBI:15377"/>
        <dbReference type="ChEBI" id="CHEBI:15378"/>
        <dbReference type="ChEBI" id="CHEBI:57305"/>
        <dbReference type="ChEBI" id="CHEBI:78442"/>
        <dbReference type="ChEBI" id="CHEBI:78522"/>
        <dbReference type="EC" id="3.1.1.96"/>
    </reaction>
</comment>
<comment type="cofactor">
    <cofactor evidence="1">
        <name>Zn(2+)</name>
        <dbReference type="ChEBI" id="CHEBI:29105"/>
    </cofactor>
    <text evidence="1">Binds 2 Zn(2+) ions per subunit.</text>
</comment>
<comment type="subunit">
    <text evidence="1">Monomer.</text>
</comment>
<comment type="similarity">
    <text evidence="1">Belongs to the DtdA deacylase family.</text>
</comment>
<sequence>MLGIVVSHADAASMHIGEHLRSLRDWETSVDETRPDDEGGGTVYQIDSVELREFEALHLDIENVAAAFDDPDLLVFASKHAGETDELLTAHHTGNFGVAEHGGEDGQFARACPGAHKAVVSALQRHAPPDYEVGMECTHHGPTAVGVPSMFVEVGSAEPQWEDPDAAEAAARAILDLADEPADRPRENGTRRHLLGVGGGHYAPRFERVVRETDWAVGHIAANWSLDALAEWADSDEERDTVLDRAFRASAADYALMEGDRPDLTAAIESLGYRVVSETFVQEATGVNLGLVEALEDAIRPVDEGLRFGALAPGYDGEWTVLDLPKELISDVRGVDSEALRDTIERQSIAYATEQNGTVVTGPIVCPATTELEAVVDPLVEILKQRFDSVERNADELVARETAFDPDLARTADIPEGPKFGKLASGESVEIDGEEIDPERFQRERIRRYTL</sequence>
<evidence type="ECO:0000255" key="1">
    <source>
        <dbReference type="HAMAP-Rule" id="MF_00562"/>
    </source>
</evidence>
<evidence type="ECO:0000256" key="2">
    <source>
        <dbReference type="SAM" id="MobiDB-lite"/>
    </source>
</evidence>
<dbReference type="EC" id="3.1.1.96" evidence="1"/>
<dbReference type="EMBL" id="AY596297">
    <property type="protein sequence ID" value="AAV45700.1"/>
    <property type="molecule type" value="Genomic_DNA"/>
</dbReference>
<dbReference type="RefSeq" id="WP_011223182.1">
    <property type="nucleotide sequence ID" value="NC_006396.1"/>
</dbReference>
<dbReference type="SMR" id="Q5V452"/>
<dbReference type="STRING" id="272569.rrnAC0704"/>
<dbReference type="PaxDb" id="272569-rrnAC0704"/>
<dbReference type="EnsemblBacteria" id="AAV45700">
    <property type="protein sequence ID" value="AAV45700"/>
    <property type="gene ID" value="rrnAC0704"/>
</dbReference>
<dbReference type="GeneID" id="40151740"/>
<dbReference type="KEGG" id="hma:rrnAC0704"/>
<dbReference type="PATRIC" id="fig|272569.17.peg.1450"/>
<dbReference type="eggNOG" id="arCOG01616">
    <property type="taxonomic scope" value="Archaea"/>
</dbReference>
<dbReference type="HOGENOM" id="CLU_610619_0_0_2"/>
<dbReference type="Proteomes" id="UP000001169">
    <property type="component" value="Chromosome I"/>
</dbReference>
<dbReference type="GO" id="GO:0051499">
    <property type="term" value="F:D-aminoacyl-tRNA deacylase activity"/>
    <property type="evidence" value="ECO:0007669"/>
    <property type="project" value="UniProtKB-UniRule"/>
</dbReference>
<dbReference type="GO" id="GO:0008270">
    <property type="term" value="F:zinc ion binding"/>
    <property type="evidence" value="ECO:0007669"/>
    <property type="project" value="UniProtKB-UniRule"/>
</dbReference>
<dbReference type="GO" id="GO:0019478">
    <property type="term" value="P:D-amino acid catabolic process"/>
    <property type="evidence" value="ECO:0007669"/>
    <property type="project" value="UniProtKB-UniRule"/>
</dbReference>
<dbReference type="Gene3D" id="3.40.50.10700">
    <property type="entry name" value="AF0625-like"/>
    <property type="match status" value="1"/>
</dbReference>
<dbReference type="Gene3D" id="3.40.630.50">
    <property type="entry name" value="AF0625-like"/>
    <property type="match status" value="1"/>
</dbReference>
<dbReference type="HAMAP" id="MF_00562">
    <property type="entry name" value="Deacylase_DtdA"/>
    <property type="match status" value="1"/>
</dbReference>
<dbReference type="InterPro" id="IPR018033">
    <property type="entry name" value="Deacylase_DtdA_archaea"/>
</dbReference>
<dbReference type="InterPro" id="IPR007508">
    <property type="entry name" value="DtdA"/>
</dbReference>
<dbReference type="NCBIfam" id="NF011435">
    <property type="entry name" value="PRK14866.1-1"/>
    <property type="match status" value="1"/>
</dbReference>
<dbReference type="PANTHER" id="PTHR34667">
    <property type="entry name" value="D-AMINOACYL-TRNA DEACYLASE"/>
    <property type="match status" value="1"/>
</dbReference>
<dbReference type="PANTHER" id="PTHR34667:SF1">
    <property type="entry name" value="D-AMINOACYL-TRNA DEACYLASE"/>
    <property type="match status" value="1"/>
</dbReference>
<dbReference type="Pfam" id="PF04414">
    <property type="entry name" value="tRNA_deacylase"/>
    <property type="match status" value="1"/>
</dbReference>
<dbReference type="SUPFAM" id="SSF142535">
    <property type="entry name" value="AF0625-like"/>
    <property type="match status" value="1"/>
</dbReference>
<gene>
    <name evidence="1" type="primary">dtdA</name>
    <name type="ordered locus">rrnAC0704</name>
</gene>
<proteinExistence type="inferred from homology"/>
<reference key="1">
    <citation type="journal article" date="2004" name="Genome Res.">
        <title>Genome sequence of Haloarcula marismortui: a halophilic archaeon from the Dead Sea.</title>
        <authorList>
            <person name="Baliga N.S."/>
            <person name="Bonneau R."/>
            <person name="Facciotti M.T."/>
            <person name="Pan M."/>
            <person name="Glusman G."/>
            <person name="Deutsch E.W."/>
            <person name="Shannon P."/>
            <person name="Chiu Y."/>
            <person name="Weng R.S."/>
            <person name="Gan R.R."/>
            <person name="Hung P."/>
            <person name="Date S.V."/>
            <person name="Marcotte E."/>
            <person name="Hood L."/>
            <person name="Ng W.V."/>
        </authorList>
    </citation>
    <scope>NUCLEOTIDE SEQUENCE [LARGE SCALE GENOMIC DNA]</scope>
    <source>
        <strain>ATCC 43049 / DSM 3752 / JCM 8966 / VKM B-1809</strain>
    </source>
</reference>
<protein>
    <recommendedName>
        <fullName evidence="1">D-aminoacyl-tRNA deacylase</fullName>
        <ecNumber evidence="1">3.1.1.96</ecNumber>
    </recommendedName>
    <alternativeName>
        <fullName>D-tyrosyl-tRNA(Tyr) deacylase</fullName>
    </alternativeName>
</protein>
<organism>
    <name type="scientific">Haloarcula marismortui (strain ATCC 43049 / DSM 3752 / JCM 8966 / VKM B-1809)</name>
    <name type="common">Halobacterium marismortui</name>
    <dbReference type="NCBI Taxonomy" id="272569"/>
    <lineage>
        <taxon>Archaea</taxon>
        <taxon>Methanobacteriati</taxon>
        <taxon>Methanobacteriota</taxon>
        <taxon>Stenosarchaea group</taxon>
        <taxon>Halobacteria</taxon>
        <taxon>Halobacteriales</taxon>
        <taxon>Haloarculaceae</taxon>
        <taxon>Haloarcula</taxon>
    </lineage>
</organism>
<name>DTDA_HALMA</name>
<feature type="chain" id="PRO_0000345208" description="D-aminoacyl-tRNA deacylase">
    <location>
        <begin position="1"/>
        <end position="451"/>
    </location>
</feature>
<feature type="region of interest" description="Disordered" evidence="2">
    <location>
        <begin position="410"/>
        <end position="437"/>
    </location>
</feature>
<accession>Q5V452</accession>